<organism>
    <name type="scientific">Rickettsia rickettsii (strain Sheila Smith)</name>
    <dbReference type="NCBI Taxonomy" id="392021"/>
    <lineage>
        <taxon>Bacteria</taxon>
        <taxon>Pseudomonadati</taxon>
        <taxon>Pseudomonadota</taxon>
        <taxon>Alphaproteobacteria</taxon>
        <taxon>Rickettsiales</taxon>
        <taxon>Rickettsiaceae</taxon>
        <taxon>Rickettsieae</taxon>
        <taxon>Rickettsia</taxon>
        <taxon>spotted fever group</taxon>
    </lineage>
</organism>
<protein>
    <recommendedName>
        <fullName evidence="1">Co-chaperone protein HscB homolog</fullName>
    </recommendedName>
</protein>
<reference key="1">
    <citation type="submission" date="2007-09" db="EMBL/GenBank/DDBJ databases">
        <title>Complete genome sequence of Rickettsia rickettsii.</title>
        <authorList>
            <person name="Madan A."/>
            <person name="Fahey J."/>
            <person name="Helton E."/>
            <person name="Ketteman M."/>
            <person name="Madan A."/>
            <person name="Rodrigues S."/>
            <person name="Sanchez A."/>
            <person name="Dasch G."/>
            <person name="Eremeeva M."/>
        </authorList>
    </citation>
    <scope>NUCLEOTIDE SEQUENCE [LARGE SCALE GENOMIC DNA]</scope>
    <source>
        <strain>Sheila Smith</strain>
    </source>
</reference>
<accession>A8GR50</accession>
<name>HSCB_RICRS</name>
<evidence type="ECO:0000255" key="1">
    <source>
        <dbReference type="HAMAP-Rule" id="MF_00682"/>
    </source>
</evidence>
<gene>
    <name evidence="1" type="primary">hscB</name>
    <name type="ordered locus">A1G_01505</name>
</gene>
<comment type="function">
    <text evidence="1">Co-chaperone involved in the maturation of iron-sulfur cluster-containing proteins. Seems to help targeting proteins to be folded toward HscA.</text>
</comment>
<comment type="subunit">
    <text evidence="1">Interacts with HscA and stimulates its ATPase activity.</text>
</comment>
<comment type="similarity">
    <text evidence="1">Belongs to the HscB family.</text>
</comment>
<sequence>MQNYFQLLGLPQEYNINLKILEKQYFAMQVKYHPDKAKTLQEKEQNLITAAELNNAYSTLKDALKRAEYMLLLQNINLNDEKTRSLLSPLELSIFWDEMEIIENTILFSDLEKIKDKYELMKKLEIDALKQAFEEQNLSDATIKTSKLKYIGTLLHKLQEKIKSCK</sequence>
<feature type="chain" id="PRO_1000083029" description="Co-chaperone protein HscB homolog">
    <location>
        <begin position="1"/>
        <end position="166"/>
    </location>
</feature>
<feature type="domain" description="J" evidence="1">
    <location>
        <begin position="3"/>
        <end position="73"/>
    </location>
</feature>
<proteinExistence type="inferred from homology"/>
<dbReference type="EMBL" id="CP000848">
    <property type="protein sequence ID" value="ABV75875.1"/>
    <property type="molecule type" value="Genomic_DNA"/>
</dbReference>
<dbReference type="RefSeq" id="WP_012150480.1">
    <property type="nucleotide sequence ID" value="NZ_CP121767.1"/>
</dbReference>
<dbReference type="SMR" id="A8GR50"/>
<dbReference type="GeneID" id="79937047"/>
<dbReference type="KEGG" id="rri:A1G_01505"/>
<dbReference type="HOGENOM" id="CLU_068529_2_0_5"/>
<dbReference type="Proteomes" id="UP000006832">
    <property type="component" value="Chromosome"/>
</dbReference>
<dbReference type="GO" id="GO:0001671">
    <property type="term" value="F:ATPase activator activity"/>
    <property type="evidence" value="ECO:0007669"/>
    <property type="project" value="InterPro"/>
</dbReference>
<dbReference type="GO" id="GO:0051087">
    <property type="term" value="F:protein-folding chaperone binding"/>
    <property type="evidence" value="ECO:0007669"/>
    <property type="project" value="InterPro"/>
</dbReference>
<dbReference type="GO" id="GO:0044571">
    <property type="term" value="P:[2Fe-2S] cluster assembly"/>
    <property type="evidence" value="ECO:0007669"/>
    <property type="project" value="InterPro"/>
</dbReference>
<dbReference type="GO" id="GO:0051259">
    <property type="term" value="P:protein complex oligomerization"/>
    <property type="evidence" value="ECO:0007669"/>
    <property type="project" value="InterPro"/>
</dbReference>
<dbReference type="GO" id="GO:0006457">
    <property type="term" value="P:protein folding"/>
    <property type="evidence" value="ECO:0007669"/>
    <property type="project" value="UniProtKB-UniRule"/>
</dbReference>
<dbReference type="CDD" id="cd06257">
    <property type="entry name" value="DnaJ"/>
    <property type="match status" value="1"/>
</dbReference>
<dbReference type="Gene3D" id="1.10.287.110">
    <property type="entry name" value="DnaJ domain"/>
    <property type="match status" value="1"/>
</dbReference>
<dbReference type="HAMAP" id="MF_00682">
    <property type="entry name" value="HscB"/>
    <property type="match status" value="1"/>
</dbReference>
<dbReference type="InterPro" id="IPR001623">
    <property type="entry name" value="DnaJ_domain"/>
</dbReference>
<dbReference type="InterPro" id="IPR004640">
    <property type="entry name" value="HscB"/>
</dbReference>
<dbReference type="InterPro" id="IPR036386">
    <property type="entry name" value="HscB_C_sf"/>
</dbReference>
<dbReference type="InterPro" id="IPR036869">
    <property type="entry name" value="J_dom_sf"/>
</dbReference>
<dbReference type="NCBIfam" id="TIGR00714">
    <property type="entry name" value="hscB"/>
    <property type="match status" value="1"/>
</dbReference>
<dbReference type="PANTHER" id="PTHR14021">
    <property type="entry name" value="IRON-SULFUR CLUSTER CO-CHAPERONE PROTEIN HSCB"/>
    <property type="match status" value="1"/>
</dbReference>
<dbReference type="PANTHER" id="PTHR14021:SF15">
    <property type="entry name" value="IRON-SULFUR CLUSTER CO-CHAPERONE PROTEIN HSCB"/>
    <property type="match status" value="1"/>
</dbReference>
<dbReference type="Pfam" id="PF00226">
    <property type="entry name" value="DnaJ"/>
    <property type="match status" value="1"/>
</dbReference>
<dbReference type="SMART" id="SM00271">
    <property type="entry name" value="DnaJ"/>
    <property type="match status" value="1"/>
</dbReference>
<dbReference type="SUPFAM" id="SSF46565">
    <property type="entry name" value="Chaperone J-domain"/>
    <property type="match status" value="1"/>
</dbReference>
<dbReference type="SUPFAM" id="SSF47144">
    <property type="entry name" value="HSC20 (HSCB), C-terminal oligomerisation domain"/>
    <property type="match status" value="1"/>
</dbReference>
<dbReference type="PROSITE" id="PS50076">
    <property type="entry name" value="DNAJ_2"/>
    <property type="match status" value="1"/>
</dbReference>
<keyword id="KW-0143">Chaperone</keyword>